<dbReference type="EC" id="1.1.1.146" evidence="6 8 11 12"/>
<dbReference type="EC" id="1.1.1.201" evidence="8"/>
<dbReference type="EMBL" id="J05107">
    <property type="protein sequence ID" value="AAA40886.1"/>
    <property type="molecule type" value="mRNA"/>
</dbReference>
<dbReference type="EMBL" id="BC078865">
    <property type="protein sequence ID" value="AAH78865.1"/>
    <property type="molecule type" value="mRNA"/>
</dbReference>
<dbReference type="EMBL" id="S43333">
    <property type="protein sequence ID" value="AAB22993.1"/>
    <property type="molecule type" value="Genomic_DNA"/>
</dbReference>
<dbReference type="EMBL" id="Y10420">
    <property type="protein sequence ID" value="CAA71447.1"/>
    <property type="molecule type" value="Genomic_DNA"/>
</dbReference>
<dbReference type="EMBL" id="M77835">
    <property type="protein sequence ID" value="AAA40600.1"/>
    <property type="molecule type" value="mRNA"/>
</dbReference>
<dbReference type="PIR" id="A34430">
    <property type="entry name" value="DXRTBH"/>
</dbReference>
<dbReference type="RefSeq" id="NP_001416392.1">
    <molecule id="P16232-1"/>
    <property type="nucleotide sequence ID" value="NM_001429463.1"/>
</dbReference>
<dbReference type="RefSeq" id="NP_001416394.1">
    <molecule id="P16232-1"/>
    <property type="nucleotide sequence ID" value="NM_001429465.1"/>
</dbReference>
<dbReference type="RefSeq" id="NP_058776.2">
    <molecule id="P16232-1"/>
    <property type="nucleotide sequence ID" value="NM_017080.2"/>
</dbReference>
<dbReference type="RefSeq" id="XP_006250535.1">
    <property type="nucleotide sequence ID" value="XM_006250473.3"/>
</dbReference>
<dbReference type="SMR" id="P16232"/>
<dbReference type="FunCoup" id="P16232">
    <property type="interactions" value="172"/>
</dbReference>
<dbReference type="IntAct" id="P16232">
    <property type="interactions" value="1"/>
</dbReference>
<dbReference type="BindingDB" id="P16232"/>
<dbReference type="ChEMBL" id="CHEMBL2391"/>
<dbReference type="DrugCentral" id="P16232"/>
<dbReference type="GuidetoPHARMACOLOGY" id="2763"/>
<dbReference type="GlyCosmos" id="P16232">
    <property type="glycosylation" value="2 sites, No reported glycans"/>
</dbReference>
<dbReference type="GlyGen" id="P16232">
    <property type="glycosylation" value="2 sites"/>
</dbReference>
<dbReference type="iPTMnet" id="P16232"/>
<dbReference type="PhosphoSitePlus" id="P16232"/>
<dbReference type="GeneID" id="25116"/>
<dbReference type="KEGG" id="rno:25116"/>
<dbReference type="AGR" id="RGD:2834"/>
<dbReference type="CTD" id="3290"/>
<dbReference type="RGD" id="2834">
    <property type="gene designation" value="Hsd11b1"/>
</dbReference>
<dbReference type="VEuPathDB" id="HostDB:ENSRNOG00000005861"/>
<dbReference type="HOGENOM" id="CLU_010194_2_1_1"/>
<dbReference type="InParanoid" id="P16232"/>
<dbReference type="PhylomeDB" id="P16232"/>
<dbReference type="BRENDA" id="1.1.1.146">
    <property type="organism ID" value="5301"/>
</dbReference>
<dbReference type="BRENDA" id="1.1.1.B40">
    <property type="organism ID" value="5301"/>
</dbReference>
<dbReference type="Reactome" id="R-RNO-194002">
    <property type="pathway name" value="Glucocorticoid biosynthesis"/>
</dbReference>
<dbReference type="Reactome" id="R-RNO-9757110">
    <property type="pathway name" value="Prednisone ADME"/>
</dbReference>
<dbReference type="SABIO-RK" id="P16232"/>
<dbReference type="PRO" id="PR:P16232"/>
<dbReference type="Proteomes" id="UP000002494">
    <property type="component" value="Chromosome 13"/>
</dbReference>
<dbReference type="Bgee" id="ENSRNOG00000005861">
    <property type="expression patterns" value="Expressed in liver and 19 other cell types or tissues"/>
</dbReference>
<dbReference type="ExpressionAtlas" id="P16232">
    <property type="expression patterns" value="baseline and differential"/>
</dbReference>
<dbReference type="GO" id="GO:0045177">
    <property type="term" value="C:apical part of cell"/>
    <property type="evidence" value="ECO:0000314"/>
    <property type="project" value="RGD"/>
</dbReference>
<dbReference type="GO" id="GO:0005789">
    <property type="term" value="C:endoplasmic reticulum membrane"/>
    <property type="evidence" value="ECO:0000266"/>
    <property type="project" value="RGD"/>
</dbReference>
<dbReference type="GO" id="GO:0043231">
    <property type="term" value="C:intracellular membrane-bounded organelle"/>
    <property type="evidence" value="ECO:0000318"/>
    <property type="project" value="GO_Central"/>
</dbReference>
<dbReference type="GO" id="GO:0031965">
    <property type="term" value="C:nuclear membrane"/>
    <property type="evidence" value="ECO:0000314"/>
    <property type="project" value="RGD"/>
</dbReference>
<dbReference type="GO" id="GO:0070524">
    <property type="term" value="F:11-beta-hydroxysteroid dehydrogenase (NADP+) activity"/>
    <property type="evidence" value="ECO:0000266"/>
    <property type="project" value="RGD"/>
</dbReference>
<dbReference type="GO" id="GO:0047022">
    <property type="term" value="F:7-beta-hydroxysteroid dehydrogenase (NADP+) activity"/>
    <property type="evidence" value="ECO:0007669"/>
    <property type="project" value="RHEA"/>
</dbReference>
<dbReference type="GO" id="GO:0050661">
    <property type="term" value="F:NADP binding"/>
    <property type="evidence" value="ECO:0000314"/>
    <property type="project" value="RGD"/>
</dbReference>
<dbReference type="GO" id="GO:0042803">
    <property type="term" value="F:protein homodimerization activity"/>
    <property type="evidence" value="ECO:0000266"/>
    <property type="project" value="RGD"/>
</dbReference>
<dbReference type="GO" id="GO:0005496">
    <property type="term" value="F:steroid binding"/>
    <property type="evidence" value="ECO:0000353"/>
    <property type="project" value="RGD"/>
</dbReference>
<dbReference type="GO" id="GO:0071392">
    <property type="term" value="P:cellular response to estradiol stimulus"/>
    <property type="evidence" value="ECO:0000270"/>
    <property type="project" value="RGD"/>
</dbReference>
<dbReference type="GO" id="GO:0006704">
    <property type="term" value="P:glucocorticoid biosynthetic process"/>
    <property type="evidence" value="ECO:0000314"/>
    <property type="project" value="RGD"/>
</dbReference>
<dbReference type="GO" id="GO:0006713">
    <property type="term" value="P:glucocorticoid catabolic process"/>
    <property type="evidence" value="ECO:0000314"/>
    <property type="project" value="RGD"/>
</dbReference>
<dbReference type="GO" id="GO:0030324">
    <property type="term" value="P:lung development"/>
    <property type="evidence" value="ECO:0000266"/>
    <property type="project" value="RGD"/>
</dbReference>
<dbReference type="GO" id="GO:0008212">
    <property type="term" value="P:mineralocorticoid metabolic process"/>
    <property type="evidence" value="ECO:0000314"/>
    <property type="project" value="RGD"/>
</dbReference>
<dbReference type="GO" id="GO:0043456">
    <property type="term" value="P:regulation of pentose-phosphate shunt"/>
    <property type="evidence" value="ECO:0000314"/>
    <property type="project" value="RGD"/>
</dbReference>
<dbReference type="GO" id="GO:0031667">
    <property type="term" value="P:response to nutrient levels"/>
    <property type="evidence" value="ECO:0000270"/>
    <property type="project" value="RGD"/>
</dbReference>
<dbReference type="GO" id="GO:0006706">
    <property type="term" value="P:steroid catabolic process"/>
    <property type="evidence" value="ECO:0000318"/>
    <property type="project" value="GO_Central"/>
</dbReference>
<dbReference type="CDD" id="cd05332">
    <property type="entry name" value="11beta-HSD1_like_SDR_c"/>
    <property type="match status" value="1"/>
</dbReference>
<dbReference type="FunFam" id="3.40.50.720:FF:000329">
    <property type="entry name" value="Corticosteroid 11-beta-dehydrogenase isozyme 1"/>
    <property type="match status" value="1"/>
</dbReference>
<dbReference type="Gene3D" id="3.40.50.720">
    <property type="entry name" value="NAD(P)-binding Rossmann-like Domain"/>
    <property type="match status" value="1"/>
</dbReference>
<dbReference type="InterPro" id="IPR051253">
    <property type="entry name" value="11-beta-HSD"/>
</dbReference>
<dbReference type="InterPro" id="IPR036291">
    <property type="entry name" value="NAD(P)-bd_dom_sf"/>
</dbReference>
<dbReference type="InterPro" id="IPR020904">
    <property type="entry name" value="Sc_DH/Rdtase_CS"/>
</dbReference>
<dbReference type="InterPro" id="IPR002347">
    <property type="entry name" value="SDR_fam"/>
</dbReference>
<dbReference type="PANTHER" id="PTHR44279:SF1">
    <property type="entry name" value="11-BETA-HYDROXYSTEROID DEHYDROGENASE 1"/>
    <property type="match status" value="1"/>
</dbReference>
<dbReference type="PANTHER" id="PTHR44279">
    <property type="entry name" value="HYDROXYSTEROID (11-BETA) DEHYDROGENASE 1-LIKE B-RELATED"/>
    <property type="match status" value="1"/>
</dbReference>
<dbReference type="Pfam" id="PF00106">
    <property type="entry name" value="adh_short"/>
    <property type="match status" value="1"/>
</dbReference>
<dbReference type="PRINTS" id="PR00081">
    <property type="entry name" value="GDHRDH"/>
</dbReference>
<dbReference type="SUPFAM" id="SSF51735">
    <property type="entry name" value="NAD(P)-binding Rossmann-fold domains"/>
    <property type="match status" value="1"/>
</dbReference>
<dbReference type="PROSITE" id="PS00061">
    <property type="entry name" value="ADH_SHORT"/>
    <property type="match status" value="1"/>
</dbReference>
<accession>P16232</accession>
<accession>O09170</accession>
<accession>Q6LDH6</accession>
<keyword id="KW-0877">Alternative promoter usage</keyword>
<keyword id="KW-0903">Direct protein sequencing</keyword>
<keyword id="KW-0256">Endoplasmic reticulum</keyword>
<keyword id="KW-0325">Glycoprotein</keyword>
<keyword id="KW-0443">Lipid metabolism</keyword>
<keyword id="KW-0472">Membrane</keyword>
<keyword id="KW-0521">NADP</keyword>
<keyword id="KW-0560">Oxidoreductase</keyword>
<keyword id="KW-1185">Reference proteome</keyword>
<keyword id="KW-0735">Signal-anchor</keyword>
<keyword id="KW-0753">Steroid metabolism</keyword>
<keyword id="KW-0812">Transmembrane</keyword>
<keyword id="KW-1133">Transmembrane helix</keyword>
<organism>
    <name type="scientific">Rattus norvegicus</name>
    <name type="common">Rat</name>
    <dbReference type="NCBI Taxonomy" id="10116"/>
    <lineage>
        <taxon>Eukaryota</taxon>
        <taxon>Metazoa</taxon>
        <taxon>Chordata</taxon>
        <taxon>Craniata</taxon>
        <taxon>Vertebrata</taxon>
        <taxon>Euteleostomi</taxon>
        <taxon>Mammalia</taxon>
        <taxon>Eutheria</taxon>
        <taxon>Euarchontoglires</taxon>
        <taxon>Glires</taxon>
        <taxon>Rodentia</taxon>
        <taxon>Myomorpha</taxon>
        <taxon>Muroidea</taxon>
        <taxon>Muridae</taxon>
        <taxon>Murinae</taxon>
        <taxon>Rattus</taxon>
    </lineage>
</organism>
<reference key="1">
    <citation type="journal article" date="1989" name="J. Biol. Chem.">
        <title>Cloning and expression of rat cDNA encoding corticosteroid 11 beta-dehydrogenase.</title>
        <authorList>
            <person name="Agarwal A.K."/>
            <person name="Monder C."/>
            <person name="Eckstein B."/>
            <person name="White P.C."/>
        </authorList>
    </citation>
    <scope>NUCLEOTIDE SEQUENCE [MRNA] (ISOFORM 11-HSD1A)</scope>
    <scope>CATALYTIC ACTIVITY</scope>
    <scope>TISSUE SPECIFICITY</scope>
    <source>
        <tissue>Liver</tissue>
    </source>
</reference>
<reference key="2">
    <citation type="journal article" date="2004" name="Genome Res.">
        <title>The status, quality, and expansion of the NIH full-length cDNA project: the Mammalian Gene Collection (MGC).</title>
        <authorList>
            <consortium name="The MGC Project Team"/>
        </authorList>
    </citation>
    <scope>NUCLEOTIDE SEQUENCE [LARGE SCALE MRNA]</scope>
    <source>
        <tissue>Kidney</tissue>
    </source>
</reference>
<reference key="3">
    <citation type="journal article" date="1992" name="Mol. Endocrinol.">
        <title>Differential promoter usage by the rat 11 beta-hydroxysteroid dehydrogenase gene.</title>
        <authorList>
            <person name="Moisan M.P."/>
            <person name="Edwards C.R."/>
            <person name="Seckl J.R."/>
        </authorList>
    </citation>
    <scope>NUCLEOTIDE SEQUENCE OF 1-69 (ISOFORMS 11-HSD1A AND 11-HSD1B)</scope>
    <scope>ALTERNATIVE PROMOTER USAGE</scope>
</reference>
<reference key="4">
    <citation type="journal article" date="2000" name="J. Biol. Chem.">
        <title>C/EBP regulates hepatic transcription of 11beta-hydroxysteroid dehydrogenase type 1. A novel mechanism for cross-talk between the C/EBP and glucocorticoid signaling pathways.</title>
        <authorList>
            <person name="Williams L.J.S."/>
            <person name="Lyons V."/>
            <person name="MacLeod I."/>
            <person name="Rajan V."/>
            <person name="Darlington G.J."/>
            <person name="Poli V."/>
            <person name="Seckl J.R."/>
            <person name="Chapman K.E."/>
        </authorList>
    </citation>
    <scope>NUCLEOTIDE SEQUENCE [GENOMIC DNA] OF 1-69 (ISOFORM 11-HSD1A)</scope>
    <source>
        <strain>Sprague-Dawley</strain>
    </source>
</reference>
<reference key="5">
    <citation type="journal article" date="2002" name="Protein Expr. Purif.">
        <title>Purification of full-length recombinant human and rat type 1 11beta-hydroxysteroid dehydrogenases with retained oxidoreductase activities.</title>
        <authorList>
            <person name="Nobel C.S.I."/>
            <person name="Dunas F."/>
            <person name="Abrahmsen L.B."/>
        </authorList>
    </citation>
    <scope>NUCLEOTIDE SEQUENCE OF 21-273</scope>
    <scope>FUNCTION</scope>
    <scope>CATALYTIC ACTIVITY</scope>
    <scope>BIOPHYSICOCHEMICAL PROPERTIES</scope>
</reference>
<reference key="6">
    <citation type="journal article" date="1992" name="J. Biol. Chem.">
        <title>Tissue-specific expression of an 11 beta-hydroxysteroid dehydrogenase with a truncated N-terminal domain. A potential mechanism for differential intracellular localization within mineralocorticoid target cells.</title>
        <authorList>
            <person name="Krozowski Z."/>
            <person name="Obeyesekere V."/>
            <person name="Smith R."/>
            <person name="Mercer W."/>
        </authorList>
    </citation>
    <scope>PARTIAL NUCLEOTIDE SEQUENCE [MRNA] (ISOFORMS 11-HSD1A AND 11-HSD1B)</scope>
    <scope>ALTERNATIVE PROMOTER USAGE</scope>
    <source>
        <strain>Sprague-Dawley</strain>
        <tissue>Kidney</tissue>
    </source>
</reference>
<reference key="7">
    <citation type="journal article" date="1986" name="J. Clin. Endocrinol. Metab.">
        <title>The syndrome of apparent mineralocorticoid excess: its association with 11 beta-dehydrogenase and 5 beta-reductase deficiency and some consequences for corticosteroid metabolism.</title>
        <authorList>
            <person name="Monder C."/>
            <person name="Shackleton C.H.L."/>
            <person name="Bradlow H.L."/>
            <person name="New M.I."/>
            <person name="Stoner E."/>
            <person name="Iohan F."/>
            <person name="Lakshmi V."/>
        </authorList>
    </citation>
    <scope>PROTEIN SEQUENCE OF 1-40</scope>
</reference>
<reference key="8">
    <citation type="journal article" date="1990" name="Endocrinology">
        <title>11 beta-hydroxysteroid dehydrogenase bioactivity and messenger RNA expression in rat forebrain: localization in hypothalamus, hippocampus, and cortex.</title>
        <authorList>
            <person name="Moisan M.P."/>
            <person name="Seckl J.R."/>
            <person name="Edwards C.R."/>
        </authorList>
    </citation>
    <scope>TISSUE SPECIFICITY</scope>
</reference>
<reference key="9">
    <citation type="journal article" date="1996" name="J. Neurosci.">
        <title>11 beta-Hydroxysteroid dehydrogenase in cultured hippocampal cells reactivates inert 11-dehydrocorticosterone, potentiating neurotoxicity.</title>
        <authorList>
            <person name="Rajan V."/>
            <person name="Edwards C.R."/>
            <person name="Seckl J.R."/>
        </authorList>
    </citation>
    <scope>FUNCTION</scope>
    <scope>CATALYTIC ACTIVITY</scope>
</reference>
<reference key="10">
    <citation type="journal article" date="2004" name="J. Biol. Chem.">
        <title>Rapid hepatic metabolism of 7-ketocholesterol by 11beta-hydroxysteroid dehydrogenase type 1: species-specific differences between the rat, human, and hamster enzyme.</title>
        <authorList>
            <person name="Schweizer R.A.S."/>
            <person name="Zuercher M."/>
            <person name="Balazs Z."/>
            <person name="Dick B."/>
            <person name="Odermatt A."/>
        </authorList>
    </citation>
    <scope>FUNCTION</scope>
    <scope>CATALYTIC ACTIVITY</scope>
    <scope>BIOPHYSICOCHEMICAL PROPERTIES</scope>
</reference>
<reference key="11">
    <citation type="journal article" date="2011" name="Biochem. J.">
        <title>Hepatic reduction of the secondary bile acid 7-oxolithocholic acid is mediated by 11beta-hydroxysteroid dehydrogenase 1.</title>
        <authorList>
            <person name="Odermatt A."/>
            <person name="Da Cunha T."/>
            <person name="Penno C.A."/>
            <person name="Chandsawangbhuwana C."/>
            <person name="Reichert C."/>
            <person name="Wolf A."/>
            <person name="Dong M."/>
            <person name="Baker M.E."/>
        </authorList>
    </citation>
    <scope>TISSUE SPECIFICITY</scope>
</reference>
<reference key="12">
    <citation type="journal article" date="1992" name="Biochem. Biophys. Res. Commun.">
        <title>Tyr-179 and Lys-183 are essential for enzymatic activity of 11 beta-hydroxysteroid dehydrogenase.</title>
        <authorList>
            <person name="Obeid J."/>
            <person name="White P.C."/>
        </authorList>
    </citation>
    <scope>MUTAGENESIS OF TYR-179 AND LYS-183</scope>
</reference>
<sequence>MKKYLLPVLVLCLGYYYSTNEEFRPEMLQGKKVIVTGASKGIGREMAYHLSKMGAHVVLTARSEEGLQKVVSRCLELGAASAHYIAGTMEDMAFAERFVVEAGKLLGGLDMLILNHITQTTMSLFHDDIHSVRRSMEVNFLSYVVLSTAALPMLKQSNGSIAIISSMAGKMTQPLIASYSASKFALDGFFSTIRKEHLMTKVNVSITLCVLGFIDTETALKETSGIILSQAAPKEECALEIIKGTVLRKDEVYYDKSSWTPLLLGNPGRRIMEFLSLRSYNRDLFVSN</sequence>
<feature type="chain" id="PRO_0000054623" description="11-beta-hydroxysteroid dehydrogenase 1">
    <location>
        <begin position="1"/>
        <end position="288"/>
    </location>
</feature>
<feature type="topological domain" description="Cytoplasmic" evidence="4">
    <location>
        <begin position="1"/>
        <end position="4"/>
    </location>
</feature>
<feature type="transmembrane region" description="Helical; Signal-anchor for type II membrane protein" evidence="4">
    <location>
        <begin position="5"/>
        <end position="20"/>
    </location>
</feature>
<feature type="topological domain" description="Lumenal" evidence="4">
    <location>
        <begin position="21"/>
        <end position="288"/>
    </location>
</feature>
<feature type="active site" description="Proton acceptor" evidence="5">
    <location>
        <position position="179"/>
    </location>
</feature>
<feature type="binding site" evidence="2">
    <location>
        <begin position="37"/>
        <end position="63"/>
    </location>
    <ligand>
        <name>NADP(+)</name>
        <dbReference type="ChEBI" id="CHEBI:58349"/>
    </ligand>
</feature>
<feature type="binding site" evidence="2">
    <location>
        <begin position="88"/>
        <end position="89"/>
    </location>
    <ligand>
        <name>NADP(+)</name>
        <dbReference type="ChEBI" id="CHEBI:58349"/>
    </ligand>
</feature>
<feature type="binding site" evidence="2">
    <location>
        <begin position="115"/>
        <end position="117"/>
    </location>
    <ligand>
        <name>NADP(+)</name>
        <dbReference type="ChEBI" id="CHEBI:58349"/>
    </ligand>
</feature>
<feature type="binding site" evidence="1">
    <location>
        <position position="166"/>
    </location>
    <ligand>
        <name>substrate</name>
    </ligand>
</feature>
<feature type="binding site" evidence="2">
    <location>
        <begin position="179"/>
        <end position="183"/>
    </location>
    <ligand>
        <name>NADP(+)</name>
        <dbReference type="ChEBI" id="CHEBI:58349"/>
    </ligand>
</feature>
<feature type="binding site" evidence="1">
    <location>
        <begin position="212"/>
        <end position="218"/>
    </location>
    <ligand>
        <name>NADP(+)</name>
        <dbReference type="ChEBI" id="CHEBI:58349"/>
    </ligand>
</feature>
<feature type="binding site" evidence="2">
    <location>
        <begin position="214"/>
        <end position="218"/>
    </location>
    <ligand>
        <name>NADP(+)</name>
        <dbReference type="ChEBI" id="CHEBI:58349"/>
    </ligand>
</feature>
<feature type="glycosylation site" description="N-linked (GlcNAc...) asparagine" evidence="4">
    <location>
        <position position="158"/>
    </location>
</feature>
<feature type="glycosylation site" description="N-linked (GlcNAc...) asparagine" evidence="4">
    <location>
        <position position="203"/>
    </location>
</feature>
<feature type="splice variant" id="VSP_012616" description="In isoform 11-HSD1B." evidence="16">
    <location>
        <begin position="1"/>
        <end position="26"/>
    </location>
</feature>
<feature type="mutagenesis site" description="Slight loss of activity.">
    <original>D</original>
    <variation>N</variation>
    <location>
        <position position="110"/>
    </location>
</feature>
<feature type="mutagenesis site" description="Complete loss of activity." evidence="7">
    <original>Y</original>
    <variation>F</variation>
    <variation>S</variation>
    <location>
        <position position="179"/>
    </location>
</feature>
<feature type="mutagenesis site" description="Complete loss of activity." evidence="7">
    <original>K</original>
    <variation>R</variation>
    <location>
        <position position="183"/>
    </location>
</feature>
<feature type="sequence conflict" description="In Ref. 4; CAA71447." evidence="16" ref="4">
    <original>K</original>
    <variation>N</variation>
    <location>
        <position position="31"/>
    </location>
</feature>
<feature type="sequence conflict" description="In Ref. 1; AAA40886." evidence="16" ref="1">
    <original>E</original>
    <variation>Q</variation>
    <location>
        <position position="235"/>
    </location>
</feature>
<feature type="sequence conflict" description="In Ref. 1; AAA40886." evidence="16" ref="1">
    <location>
        <position position="241"/>
    </location>
</feature>
<proteinExistence type="evidence at protein level"/>
<protein>
    <recommendedName>
        <fullName evidence="13 14">11-beta-hydroxysteroid dehydrogenase 1</fullName>
        <shortName evidence="15">11-DH</shortName>
        <shortName evidence="13 14">11-beta-HSD1</shortName>
        <ecNumber evidence="6 8 11 12">1.1.1.146</ecNumber>
    </recommendedName>
    <alternativeName>
        <fullName>7-oxosteroid reductase</fullName>
        <ecNumber evidence="8">1.1.1.201</ecNumber>
    </alternativeName>
    <alternativeName>
        <fullName evidence="16">Corticosteroid 11-beta-dehydrogenase isozyme 1</fullName>
    </alternativeName>
</protein>
<name>DHI1_RAT</name>
<comment type="function">
    <text evidence="2 3 6 8 12 13">Controls the reversible conversion of biologically active glucocorticoids such as 11-dehydrocorticosterone to corticosterone using NADP(H) (PubMed:12460758, PubMed:14973125, PubMed:8613810). Participates in the corticosteroid receptor-mediated anti-inflammatory response, as well as metabolic and homeostatic processes (By similarity). Bidirectional in vitro, predominantly functions as a reductase in vivo, thereby increasing the concentration of active glucocorticoids (PubMed:12460758). It has broad substrate specificity, besides glucocorticoids, it accepts other steroid and sterol substrates (PubMed:14973125). Interconverts 7-oxo- and 7-hydroxy-neurosteroids such as 7-oxopregnenolone and 7beta-hydroxypregnenolone, 7-oxodehydroepiandrosterone (3beta-hydroxy-5-androstene-7,17-dione) and 7beta-hydroxydehydroepiandrosterone (3beta,7beta-dihydroxyandrost-5-en-17-one), among others (By similarity). Catalyzes the stereo-specific conversion of the major dietary oxysterol, 7-ketocholesterol (7-oxocholesterol), into the more polar 7-beta-hydroxycholesterol metabolite (PubMed:14973125). 7-oxocholesterol is one of the most important oxysterols, it participates in several events such as induction of apoptosis, accumulation in atherosclerotic lesions, lipid peroxidation, and induction of foam cell formation (By similarity). Mediates the 7-oxo reduction of 7-oxolithocholate mainly to chenodeoxycholate, and to a lesser extent to ursodeoxycholate, both in its free form and when conjugated to glycine or taurine, providing a link between glucocorticoid activation and bile acid metabolism (By similarity). Catalyzes the synthesis of 7-beta-25-dihydroxycholesterol from 7-oxo-25-hydroxycholesterol in vitro, which acts as a ligand for the G-protein-coupled receptor (GPCR) Epstein-Barr virus-induced gene 2 (EBI2) and may thereby regulate immune cell migration (By similarity).</text>
</comment>
<comment type="catalytic activity">
    <reaction evidence="6 8 11 12">
        <text>an 11beta-hydroxysteroid + NADP(+) = an 11-oxosteroid + NADPH + H(+)</text>
        <dbReference type="Rhea" id="RHEA:11388"/>
        <dbReference type="ChEBI" id="CHEBI:15378"/>
        <dbReference type="ChEBI" id="CHEBI:35346"/>
        <dbReference type="ChEBI" id="CHEBI:47787"/>
        <dbReference type="ChEBI" id="CHEBI:57783"/>
        <dbReference type="ChEBI" id="CHEBI:58349"/>
        <dbReference type="EC" id="1.1.1.146"/>
    </reaction>
    <physiologicalReaction direction="left-to-right" evidence="6 8 11">
        <dbReference type="Rhea" id="RHEA:11389"/>
    </physiologicalReaction>
    <physiologicalReaction direction="right-to-left" evidence="6 8 11 12">
        <dbReference type="Rhea" id="RHEA:11390"/>
    </physiologicalReaction>
</comment>
<comment type="catalytic activity">
    <reaction evidence="6 8 11 12">
        <text>corticosterone + NADP(+) = 11-dehydrocorticosterone + NADPH + H(+)</text>
        <dbReference type="Rhea" id="RHEA:42200"/>
        <dbReference type="ChEBI" id="CHEBI:15378"/>
        <dbReference type="ChEBI" id="CHEBI:16827"/>
        <dbReference type="ChEBI" id="CHEBI:57783"/>
        <dbReference type="ChEBI" id="CHEBI:58349"/>
        <dbReference type="ChEBI" id="CHEBI:78600"/>
    </reaction>
    <physiologicalReaction direction="left-to-right" evidence="6 8 11">
        <dbReference type="Rhea" id="RHEA:42201"/>
    </physiologicalReaction>
    <physiologicalReaction direction="right-to-left" evidence="6 8 11 12">
        <dbReference type="Rhea" id="RHEA:42202"/>
    </physiologicalReaction>
</comment>
<comment type="catalytic activity">
    <reaction evidence="2">
        <text>a 7beta-hydroxysteroid + NADP(+) = a 7-oxosteroid + NADPH + H(+)</text>
        <dbReference type="Rhea" id="RHEA:20233"/>
        <dbReference type="ChEBI" id="CHEBI:15378"/>
        <dbReference type="ChEBI" id="CHEBI:35349"/>
        <dbReference type="ChEBI" id="CHEBI:47789"/>
        <dbReference type="ChEBI" id="CHEBI:57783"/>
        <dbReference type="ChEBI" id="CHEBI:58349"/>
        <dbReference type="EC" id="1.1.1.201"/>
    </reaction>
    <physiologicalReaction direction="right-to-left" evidence="2">
        <dbReference type="Rhea" id="RHEA:20235"/>
    </physiologicalReaction>
</comment>
<comment type="catalytic activity">
    <reaction evidence="8">
        <text>7-oxocholesterol + NADPH + H(+) = 7beta-hydroxycholesterol + NADP(+)</text>
        <dbReference type="Rhea" id="RHEA:68656"/>
        <dbReference type="ChEBI" id="CHEBI:15378"/>
        <dbReference type="ChEBI" id="CHEBI:42989"/>
        <dbReference type="ChEBI" id="CHEBI:57783"/>
        <dbReference type="ChEBI" id="CHEBI:58349"/>
        <dbReference type="ChEBI" id="CHEBI:64294"/>
    </reaction>
    <physiologicalReaction direction="left-to-right" evidence="8">
        <dbReference type="Rhea" id="RHEA:68657"/>
    </physiologicalReaction>
</comment>
<comment type="catalytic activity">
    <reaction evidence="2">
        <text>chenodeoxycholate + NADP(+) = 7-oxolithocholate + NADPH + H(+)</text>
        <dbReference type="Rhea" id="RHEA:53820"/>
        <dbReference type="ChEBI" id="CHEBI:15378"/>
        <dbReference type="ChEBI" id="CHEBI:36234"/>
        <dbReference type="ChEBI" id="CHEBI:57783"/>
        <dbReference type="ChEBI" id="CHEBI:58349"/>
        <dbReference type="ChEBI" id="CHEBI:78605"/>
    </reaction>
    <physiologicalReaction direction="right-to-left" evidence="2">
        <dbReference type="Rhea" id="RHEA:53822"/>
    </physiologicalReaction>
</comment>
<comment type="catalytic activity">
    <reaction evidence="2">
        <text>7-oxolithocholate + NADPH + H(+) = ursodeoxycholate + NADP(+)</text>
        <dbReference type="Rhea" id="RHEA:47540"/>
        <dbReference type="ChEBI" id="CHEBI:15378"/>
        <dbReference type="ChEBI" id="CHEBI:57783"/>
        <dbReference type="ChEBI" id="CHEBI:58349"/>
        <dbReference type="ChEBI" id="CHEBI:78604"/>
        <dbReference type="ChEBI" id="CHEBI:78605"/>
    </reaction>
    <physiologicalReaction direction="left-to-right" evidence="2">
        <dbReference type="Rhea" id="RHEA:47541"/>
    </physiologicalReaction>
</comment>
<comment type="catalytic activity">
    <reaction evidence="2">
        <text>glycochenodeoxycholate + NADP(+) = 7-oxoglycolithocholate + NADPH + H(+)</text>
        <dbReference type="Rhea" id="RHEA:65056"/>
        <dbReference type="ChEBI" id="CHEBI:15378"/>
        <dbReference type="ChEBI" id="CHEBI:36252"/>
        <dbReference type="ChEBI" id="CHEBI:57783"/>
        <dbReference type="ChEBI" id="CHEBI:58349"/>
        <dbReference type="ChEBI" id="CHEBI:137818"/>
    </reaction>
    <physiologicalReaction direction="right-to-left" evidence="2">
        <dbReference type="Rhea" id="RHEA:65058"/>
    </physiologicalReaction>
</comment>
<comment type="catalytic activity">
    <reaction evidence="2">
        <text>taurochenodeoxycholate + NADP(+) = 7-oxotaurolithocholate + NADPH + H(+)</text>
        <dbReference type="Rhea" id="RHEA:65060"/>
        <dbReference type="ChEBI" id="CHEBI:9407"/>
        <dbReference type="ChEBI" id="CHEBI:15378"/>
        <dbReference type="ChEBI" id="CHEBI:57783"/>
        <dbReference type="ChEBI" id="CHEBI:58349"/>
        <dbReference type="ChEBI" id="CHEBI:137724"/>
    </reaction>
    <physiologicalReaction direction="right-to-left" evidence="2">
        <dbReference type="Rhea" id="RHEA:65062"/>
    </physiologicalReaction>
</comment>
<comment type="catalytic activity">
    <reaction evidence="2">
        <text>tauroursodeoxycholate + NADP(+) = 7-oxotaurolithocholate + NADPH + H(+)</text>
        <dbReference type="Rhea" id="RHEA:68980"/>
        <dbReference type="ChEBI" id="CHEBI:15378"/>
        <dbReference type="ChEBI" id="CHEBI:57783"/>
        <dbReference type="ChEBI" id="CHEBI:58349"/>
        <dbReference type="ChEBI" id="CHEBI:132028"/>
        <dbReference type="ChEBI" id="CHEBI:137724"/>
    </reaction>
    <physiologicalReaction direction="right-to-left" evidence="2">
        <dbReference type="Rhea" id="RHEA:68982"/>
    </physiologicalReaction>
</comment>
<comment type="catalytic activity">
    <reaction evidence="2">
        <text>glycoursodeoxycholate + NADP(+) = 7-oxoglycolithocholate + NADPH + H(+)</text>
        <dbReference type="Rhea" id="RHEA:68976"/>
        <dbReference type="ChEBI" id="CHEBI:15378"/>
        <dbReference type="ChEBI" id="CHEBI:57783"/>
        <dbReference type="ChEBI" id="CHEBI:58349"/>
        <dbReference type="ChEBI" id="CHEBI:132030"/>
        <dbReference type="ChEBI" id="CHEBI:137818"/>
    </reaction>
    <physiologicalReaction direction="right-to-left" evidence="2">
        <dbReference type="Rhea" id="RHEA:68978"/>
    </physiologicalReaction>
</comment>
<comment type="catalytic activity">
    <reaction evidence="2">
        <text>7-oxopregnenolone + NADPH + H(+) = 7beta-hydroxypregnenolone + NADP(+)</text>
        <dbReference type="Rhea" id="RHEA:69436"/>
        <dbReference type="ChEBI" id="CHEBI:15378"/>
        <dbReference type="ChEBI" id="CHEBI:57783"/>
        <dbReference type="ChEBI" id="CHEBI:58349"/>
        <dbReference type="ChEBI" id="CHEBI:183806"/>
        <dbReference type="ChEBI" id="CHEBI:183807"/>
    </reaction>
    <physiologicalReaction direction="left-to-right" evidence="2">
        <dbReference type="Rhea" id="RHEA:69437"/>
    </physiologicalReaction>
</comment>
<comment type="catalytic activity">
    <reaction evidence="2">
        <text>3beta,7alpha-dihydroxyandrost-5-en-17-one + NADP(+) = 3beta-hydroxy-5-androstene-7,17-dione + NADPH + H(+)</text>
        <dbReference type="Rhea" id="RHEA:69440"/>
        <dbReference type="ChEBI" id="CHEBI:15378"/>
        <dbReference type="ChEBI" id="CHEBI:57783"/>
        <dbReference type="ChEBI" id="CHEBI:58349"/>
        <dbReference type="ChEBI" id="CHEBI:81471"/>
        <dbReference type="ChEBI" id="CHEBI:183808"/>
    </reaction>
    <physiologicalReaction direction="left-to-right" evidence="2">
        <dbReference type="Rhea" id="RHEA:69441"/>
    </physiologicalReaction>
</comment>
<comment type="catalytic activity">
    <reaction evidence="2">
        <text>3beta-hydroxy-5-androstene-7,17-dione + NADPH + H(+) = 3beta,7beta-dihydroxyandrost-5-en-17-one + NADP(+)</text>
        <dbReference type="Rhea" id="RHEA:69452"/>
        <dbReference type="ChEBI" id="CHEBI:15378"/>
        <dbReference type="ChEBI" id="CHEBI:57783"/>
        <dbReference type="ChEBI" id="CHEBI:58349"/>
        <dbReference type="ChEBI" id="CHEBI:183368"/>
        <dbReference type="ChEBI" id="CHEBI:183808"/>
    </reaction>
    <physiologicalReaction direction="left-to-right" evidence="2">
        <dbReference type="Rhea" id="RHEA:69453"/>
    </physiologicalReaction>
</comment>
<comment type="catalytic activity">
    <reaction evidence="2">
        <text>3beta-hydroxy-5alpha-androstane-7,17-dione + NADPH + H(+) = 3beta,7beta-dihydroxy-5alpha-androstan-17-one + NADP(+)</text>
        <dbReference type="Rhea" id="RHEA:69456"/>
        <dbReference type="ChEBI" id="CHEBI:15378"/>
        <dbReference type="ChEBI" id="CHEBI:57783"/>
        <dbReference type="ChEBI" id="CHEBI:58349"/>
        <dbReference type="ChEBI" id="CHEBI:79834"/>
        <dbReference type="ChEBI" id="CHEBI:183809"/>
    </reaction>
    <physiologicalReaction direction="left-to-right" evidence="2">
        <dbReference type="Rhea" id="RHEA:69457"/>
    </physiologicalReaction>
</comment>
<comment type="biophysicochemical properties">
    <kinetics>
        <KM evidence="8">367 nM for corticosterone</KM>
        <KM evidence="8">681 nM for 11-dehydrocorticosterone</KM>
        <KM evidence="8">776 nM for 7-oxocholesterol</KM>
        <KM evidence="6">3.1 uM for 11-dehydrocorticosterone</KM>
        <KM evidence="6">2.5 uM for corticosterone</KM>
        <Vmax evidence="6">42.5 nmol/min/mg enzyme with 11-dehydrocorticosterone as substrate</Vmax>
        <Vmax evidence="6">89.9 nmol/min/mg enzyme with corticosterone as substrate</Vmax>
        <Vmax evidence="8">0.97 nmol/min/mg enzyme with corticosterone as substrate</Vmax>
        <Vmax evidence="8">0.57 nmol/min/mg enzyme with 11-dehydrocorticosterone as substrate</Vmax>
        <Vmax evidence="8">0.14 nmol/min/mg enzyme with 7-oxocholesterol as substrate</Vmax>
    </kinetics>
</comment>
<comment type="subunit">
    <text evidence="2">Homodimer.</text>
</comment>
<comment type="subcellular location">
    <subcellularLocation>
        <location>Endoplasmic reticulum membrane</location>
        <topology>Single-pass type II membrane protein</topology>
    </subcellularLocation>
</comment>
<comment type="alternative products">
    <event type="alternative promoter"/>
    <isoform>
        <id>P16232-1</id>
        <name>11-HSD1A</name>
        <sequence type="displayed"/>
    </isoform>
    <isoform>
        <id>P16232-2</id>
        <name>11-HSD1B</name>
        <sequence type="described" ref="VSP_012616"/>
    </isoform>
</comment>
<comment type="tissue specificity">
    <text evidence="9 10 11">Liver, kidney, lung and testis (PubMed:2808402). Brain (PubMed:2387261). Expressed in liver (at protein level) (PubMed:21453287).</text>
</comment>
<comment type="developmental stage">
    <text>Expression of both isoforms is found in 1 week-old rats. Expression increases exponentially up to 4 weeks but after this time there is no further increase up to 16 weeks.</text>
</comment>
<comment type="PTM">
    <text>Glycosylated.</text>
</comment>
<comment type="miscellaneous">
    <molecule>Isoform 11-HSD1B</molecule>
    <text evidence="16">Kidney-specific.</text>
</comment>
<comment type="similarity">
    <text evidence="16">Belongs to the short-chain dehydrogenases/reductases (SDR) family.</text>
</comment>
<gene>
    <name evidence="17" type="primary">Hsd11b1</name>
    <name type="synonym">Hsd11</name>
</gene>
<evidence type="ECO:0000250" key="1"/>
<evidence type="ECO:0000250" key="2">
    <source>
        <dbReference type="UniProtKB" id="P28845"/>
    </source>
</evidence>
<evidence type="ECO:0000250" key="3">
    <source>
        <dbReference type="UniProtKB" id="P50172"/>
    </source>
</evidence>
<evidence type="ECO:0000255" key="4"/>
<evidence type="ECO:0000255" key="5">
    <source>
        <dbReference type="PROSITE-ProRule" id="PRU10001"/>
    </source>
</evidence>
<evidence type="ECO:0000269" key="6">
    <source>
    </source>
</evidence>
<evidence type="ECO:0000269" key="7">
    <source>
    </source>
</evidence>
<evidence type="ECO:0000269" key="8">
    <source>
    </source>
</evidence>
<evidence type="ECO:0000269" key="9">
    <source>
    </source>
</evidence>
<evidence type="ECO:0000269" key="10">
    <source>
    </source>
</evidence>
<evidence type="ECO:0000269" key="11">
    <source>
    </source>
</evidence>
<evidence type="ECO:0000269" key="12">
    <source>
    </source>
</evidence>
<evidence type="ECO:0000303" key="13">
    <source>
    </source>
</evidence>
<evidence type="ECO:0000303" key="14">
    <source>
    </source>
</evidence>
<evidence type="ECO:0000303" key="15">
    <source>
    </source>
</evidence>
<evidence type="ECO:0000305" key="16"/>
<evidence type="ECO:0000312" key="17">
    <source>
        <dbReference type="RGD" id="2834"/>
    </source>
</evidence>